<comment type="function">
    <text evidence="1">Involved in base excision repair of DNA damaged by oxidation or by mutagenic agents. Acts as a DNA glycosylase that recognizes and removes damaged bases. Has a preference for oxidized purines, such as 7,8-dihydro-8-oxoguanine (8-oxoG). Has AP (apurinic/apyrimidinic) lyase activity and introduces nicks in the DNA strand. Cleaves the DNA backbone by beta-delta elimination to generate a single-strand break at the site of the removed base with both 3'- and 5'-phosphates (By similarity).</text>
</comment>
<comment type="catalytic activity">
    <reaction>
        <text>Hydrolysis of DNA containing ring-opened 7-methylguanine residues, releasing 2,6-diamino-4-hydroxy-5-(N-methyl)formamidopyrimidine.</text>
        <dbReference type="EC" id="3.2.2.23"/>
    </reaction>
</comment>
<comment type="catalytic activity">
    <reaction>
        <text>2'-deoxyribonucleotide-(2'-deoxyribose 5'-phosphate)-2'-deoxyribonucleotide-DNA = a 3'-end 2'-deoxyribonucleotide-(2,3-dehydro-2,3-deoxyribose 5'-phosphate)-DNA + a 5'-end 5'-phospho-2'-deoxyribonucleoside-DNA + H(+)</text>
        <dbReference type="Rhea" id="RHEA:66592"/>
        <dbReference type="Rhea" id="RHEA-COMP:13180"/>
        <dbReference type="Rhea" id="RHEA-COMP:16897"/>
        <dbReference type="Rhea" id="RHEA-COMP:17067"/>
        <dbReference type="ChEBI" id="CHEBI:15378"/>
        <dbReference type="ChEBI" id="CHEBI:136412"/>
        <dbReference type="ChEBI" id="CHEBI:157695"/>
        <dbReference type="ChEBI" id="CHEBI:167181"/>
        <dbReference type="EC" id="4.2.99.18"/>
    </reaction>
</comment>
<comment type="cofactor">
    <cofactor evidence="1">
        <name>Zn(2+)</name>
        <dbReference type="ChEBI" id="CHEBI:29105"/>
    </cofactor>
    <text evidence="1">Binds 1 zinc ion per subunit.</text>
</comment>
<comment type="subunit">
    <text evidence="1">Monomer.</text>
</comment>
<comment type="similarity">
    <text evidence="2">Belongs to the FPG family.</text>
</comment>
<proteinExistence type="inferred from homology"/>
<sequence length="274" mass="31114">MPELPEVETVKRTLTELVIGKTIAGITVKWANIIKEPADVLEFETLLMNQTIRSIRRRGKFLLFEFDDIVMVSHLRMEGRYGLYEKEEPLPPHTHVIFHFTDGEELRYQDVRKFGTMHLFPKGSEEKVLPLAHLGVEPFSEQFTSELLMNAFQKTNRKIKVALLDQKTVVGLGNIYVDEALFRARIHPERLAHSLSKEEMAVLHKAIVSTLEEAVEMGGSSIKSYVNGQGEMGMFQQKLGVYGRKNEPCRQCGTDILKTVVGGRGTHFCPNCQL</sequence>
<reference key="1">
    <citation type="journal article" date="1990" name="Nucleic Acids Res.">
        <title>Nucleotide sequence of a gene from alkaliphilic Bacillus firmus RAB that is homologous to the fpg gene of Escherichia coli.</title>
        <authorList>
            <person name="Ivey D.M."/>
        </authorList>
    </citation>
    <scope>NUCLEOTIDE SEQUENCE [GENOMIC DNA]</scope>
    <source>
        <strain>RAB</strain>
    </source>
</reference>
<dbReference type="EC" id="3.2.2.23"/>
<dbReference type="EC" id="4.2.99.18"/>
<dbReference type="EMBL" id="X53930">
    <property type="protein sequence ID" value="CAA37877.1"/>
    <property type="molecule type" value="Genomic_DNA"/>
</dbReference>
<dbReference type="PIR" id="S11489">
    <property type="entry name" value="S11489"/>
</dbReference>
<dbReference type="SMR" id="P19210"/>
<dbReference type="GO" id="GO:0034039">
    <property type="term" value="F:8-oxo-7,8-dihydroguanine DNA N-glycosylase activity"/>
    <property type="evidence" value="ECO:0007669"/>
    <property type="project" value="TreeGrafter"/>
</dbReference>
<dbReference type="GO" id="GO:0140078">
    <property type="term" value="F:class I DNA-(apurinic or apyrimidinic site) endonuclease activity"/>
    <property type="evidence" value="ECO:0007669"/>
    <property type="project" value="UniProtKB-EC"/>
</dbReference>
<dbReference type="GO" id="GO:0003684">
    <property type="term" value="F:damaged DNA binding"/>
    <property type="evidence" value="ECO:0007669"/>
    <property type="project" value="InterPro"/>
</dbReference>
<dbReference type="GO" id="GO:0008270">
    <property type="term" value="F:zinc ion binding"/>
    <property type="evidence" value="ECO:0007669"/>
    <property type="project" value="UniProtKB-UniRule"/>
</dbReference>
<dbReference type="GO" id="GO:0006284">
    <property type="term" value="P:base-excision repair"/>
    <property type="evidence" value="ECO:0007669"/>
    <property type="project" value="InterPro"/>
</dbReference>
<dbReference type="CDD" id="cd08966">
    <property type="entry name" value="EcFpg-like_N"/>
    <property type="match status" value="1"/>
</dbReference>
<dbReference type="FunFam" id="1.10.8.50:FF:000003">
    <property type="entry name" value="Formamidopyrimidine-DNA glycosylase"/>
    <property type="match status" value="1"/>
</dbReference>
<dbReference type="FunFam" id="3.20.190.10:FF:000001">
    <property type="entry name" value="Formamidopyrimidine-DNA glycosylase"/>
    <property type="match status" value="1"/>
</dbReference>
<dbReference type="Gene3D" id="1.10.8.50">
    <property type="match status" value="1"/>
</dbReference>
<dbReference type="Gene3D" id="3.20.190.10">
    <property type="entry name" value="MutM-like, N-terminal"/>
    <property type="match status" value="1"/>
</dbReference>
<dbReference type="HAMAP" id="MF_00103">
    <property type="entry name" value="Fapy_DNA_glycosyl"/>
    <property type="match status" value="1"/>
</dbReference>
<dbReference type="InterPro" id="IPR015886">
    <property type="entry name" value="DNA_glyclase/AP_lyase_DNA-bd"/>
</dbReference>
<dbReference type="InterPro" id="IPR015887">
    <property type="entry name" value="DNA_glyclase_Znf_dom_DNA_BS"/>
</dbReference>
<dbReference type="InterPro" id="IPR020629">
    <property type="entry name" value="Formamido-pyr_DNA_Glyclase"/>
</dbReference>
<dbReference type="InterPro" id="IPR012319">
    <property type="entry name" value="FPG_cat"/>
</dbReference>
<dbReference type="InterPro" id="IPR035937">
    <property type="entry name" value="MutM-like_N-ter"/>
</dbReference>
<dbReference type="InterPro" id="IPR010979">
    <property type="entry name" value="Ribosomal_uS13-like_H2TH"/>
</dbReference>
<dbReference type="InterPro" id="IPR000214">
    <property type="entry name" value="Znf_DNA_glyclase/AP_lyase"/>
</dbReference>
<dbReference type="InterPro" id="IPR010663">
    <property type="entry name" value="Znf_FPG/IleRS"/>
</dbReference>
<dbReference type="NCBIfam" id="TIGR00577">
    <property type="entry name" value="fpg"/>
    <property type="match status" value="1"/>
</dbReference>
<dbReference type="NCBIfam" id="NF002211">
    <property type="entry name" value="PRK01103.1"/>
    <property type="match status" value="1"/>
</dbReference>
<dbReference type="PANTHER" id="PTHR22993">
    <property type="entry name" value="FORMAMIDOPYRIMIDINE-DNA GLYCOSYLASE"/>
    <property type="match status" value="1"/>
</dbReference>
<dbReference type="PANTHER" id="PTHR22993:SF9">
    <property type="entry name" value="FORMAMIDOPYRIMIDINE-DNA GLYCOSYLASE"/>
    <property type="match status" value="1"/>
</dbReference>
<dbReference type="Pfam" id="PF01149">
    <property type="entry name" value="Fapy_DNA_glyco"/>
    <property type="match status" value="1"/>
</dbReference>
<dbReference type="Pfam" id="PF06831">
    <property type="entry name" value="H2TH"/>
    <property type="match status" value="1"/>
</dbReference>
<dbReference type="Pfam" id="PF06827">
    <property type="entry name" value="zf-FPG_IleRS"/>
    <property type="match status" value="1"/>
</dbReference>
<dbReference type="SMART" id="SM00898">
    <property type="entry name" value="Fapy_DNA_glyco"/>
    <property type="match status" value="1"/>
</dbReference>
<dbReference type="SMART" id="SM01232">
    <property type="entry name" value="H2TH"/>
    <property type="match status" value="1"/>
</dbReference>
<dbReference type="SUPFAM" id="SSF57716">
    <property type="entry name" value="Glucocorticoid receptor-like (DNA-binding domain)"/>
    <property type="match status" value="1"/>
</dbReference>
<dbReference type="SUPFAM" id="SSF81624">
    <property type="entry name" value="N-terminal domain of MutM-like DNA repair proteins"/>
    <property type="match status" value="1"/>
</dbReference>
<dbReference type="SUPFAM" id="SSF46946">
    <property type="entry name" value="S13-like H2TH domain"/>
    <property type="match status" value="1"/>
</dbReference>
<dbReference type="PROSITE" id="PS51068">
    <property type="entry name" value="FPG_CAT"/>
    <property type="match status" value="1"/>
</dbReference>
<dbReference type="PROSITE" id="PS01242">
    <property type="entry name" value="ZF_FPG_1"/>
    <property type="match status" value="1"/>
</dbReference>
<dbReference type="PROSITE" id="PS51066">
    <property type="entry name" value="ZF_FPG_2"/>
    <property type="match status" value="1"/>
</dbReference>
<keyword id="KW-0227">DNA damage</keyword>
<keyword id="KW-0234">DNA repair</keyword>
<keyword id="KW-0238">DNA-binding</keyword>
<keyword id="KW-0326">Glycosidase</keyword>
<keyword id="KW-0378">Hydrolase</keyword>
<keyword id="KW-0456">Lyase</keyword>
<keyword id="KW-0479">Metal-binding</keyword>
<keyword id="KW-0511">Multifunctional enzyme</keyword>
<keyword id="KW-0862">Zinc</keyword>
<keyword id="KW-0863">Zinc-finger</keyword>
<gene>
    <name type="primary">mutM</name>
    <name type="synonym">fpg</name>
</gene>
<evidence type="ECO:0000250" key="1"/>
<evidence type="ECO:0000305" key="2"/>
<accession>P19210</accession>
<name>FPG_CYTFI</name>
<feature type="initiator methionine" description="Removed" evidence="1">
    <location>
        <position position="1"/>
    </location>
</feature>
<feature type="chain" id="PRO_0000170809" description="Formamidopyrimidine-DNA glycosylase">
    <location>
        <begin position="2"/>
        <end position="274"/>
    </location>
</feature>
<feature type="zinc finger region" description="FPG-type">
    <location>
        <begin position="240"/>
        <end position="274"/>
    </location>
</feature>
<feature type="active site" description="Schiff-base intermediate with DNA" evidence="1">
    <location>
        <position position="2"/>
    </location>
</feature>
<feature type="active site" description="Proton donor" evidence="1">
    <location>
        <position position="3"/>
    </location>
</feature>
<feature type="active site" description="Proton donor; for beta-elimination activity" evidence="1">
    <location>
        <position position="60"/>
    </location>
</feature>
<feature type="active site" description="Proton donor; for delta-elimination activity" evidence="1">
    <location>
        <position position="264"/>
    </location>
</feature>
<feature type="binding site" evidence="1">
    <location>
        <position position="93"/>
    </location>
    <ligand>
        <name>DNA</name>
        <dbReference type="ChEBI" id="CHEBI:16991"/>
    </ligand>
</feature>
<feature type="binding site" evidence="1">
    <location>
        <position position="112"/>
    </location>
    <ligand>
        <name>DNA</name>
        <dbReference type="ChEBI" id="CHEBI:16991"/>
    </ligand>
</feature>
<organism>
    <name type="scientific">Cytobacillus firmus</name>
    <name type="common">Bacillus firmus</name>
    <dbReference type="NCBI Taxonomy" id="1399"/>
    <lineage>
        <taxon>Bacteria</taxon>
        <taxon>Bacillati</taxon>
        <taxon>Bacillota</taxon>
        <taxon>Bacilli</taxon>
        <taxon>Bacillales</taxon>
        <taxon>Bacillaceae</taxon>
        <taxon>Cytobacillus</taxon>
    </lineage>
</organism>
<protein>
    <recommendedName>
        <fullName>Formamidopyrimidine-DNA glycosylase</fullName>
        <shortName>Fapy-DNA glycosylase</shortName>
        <ecNumber>3.2.2.23</ecNumber>
    </recommendedName>
    <alternativeName>
        <fullName>DNA-(apurinic or apyrimidinic site) lyase MutM</fullName>
        <shortName>AP lyase MutM</shortName>
        <ecNumber>4.2.99.18</ecNumber>
    </alternativeName>
</protein>